<gene>
    <name evidence="1" type="primary">hemC</name>
    <name type="ordered locus">BR1887</name>
    <name type="ordered locus">BS1330_I1881</name>
</gene>
<organism>
    <name type="scientific">Brucella suis biovar 1 (strain 1330)</name>
    <dbReference type="NCBI Taxonomy" id="204722"/>
    <lineage>
        <taxon>Bacteria</taxon>
        <taxon>Pseudomonadati</taxon>
        <taxon>Pseudomonadota</taxon>
        <taxon>Alphaproteobacteria</taxon>
        <taxon>Hyphomicrobiales</taxon>
        <taxon>Brucellaceae</taxon>
        <taxon>Brucella/Ochrobactrum group</taxon>
        <taxon>Brucella</taxon>
    </lineage>
</organism>
<protein>
    <recommendedName>
        <fullName evidence="1">Porphobilinogen deaminase</fullName>
        <shortName evidence="1">PBG</shortName>
        <ecNumber evidence="1">2.5.1.61</ecNumber>
    </recommendedName>
    <alternativeName>
        <fullName evidence="1">Hydroxymethylbilane synthase</fullName>
        <shortName evidence="1">HMBS</shortName>
    </alternativeName>
    <alternativeName>
        <fullName evidence="1">Pre-uroporphyrinogen synthase</fullName>
    </alternativeName>
</protein>
<accession>Q8FYI6</accession>
<accession>G0K7V2</accession>
<proteinExistence type="inferred from homology"/>
<comment type="function">
    <text evidence="1">Tetrapolymerization of the monopyrrole PBG into the hydroxymethylbilane pre-uroporphyrinogen in several discrete steps.</text>
</comment>
<comment type="catalytic activity">
    <reaction evidence="1">
        <text>4 porphobilinogen + H2O = hydroxymethylbilane + 4 NH4(+)</text>
        <dbReference type="Rhea" id="RHEA:13185"/>
        <dbReference type="ChEBI" id="CHEBI:15377"/>
        <dbReference type="ChEBI" id="CHEBI:28938"/>
        <dbReference type="ChEBI" id="CHEBI:57845"/>
        <dbReference type="ChEBI" id="CHEBI:58126"/>
        <dbReference type="EC" id="2.5.1.61"/>
    </reaction>
</comment>
<comment type="cofactor">
    <cofactor evidence="1">
        <name>dipyrromethane</name>
        <dbReference type="ChEBI" id="CHEBI:60342"/>
    </cofactor>
    <text evidence="1">Binds 1 dipyrromethane group covalently.</text>
</comment>
<comment type="pathway">
    <text evidence="1">Porphyrin-containing compound metabolism; protoporphyrin-IX biosynthesis; coproporphyrinogen-III from 5-aminolevulinate: step 2/4.</text>
</comment>
<comment type="subunit">
    <text evidence="1">Monomer.</text>
</comment>
<comment type="miscellaneous">
    <text evidence="1">The porphobilinogen subunits are added to the dipyrromethane group.</text>
</comment>
<comment type="similarity">
    <text evidence="1">Belongs to the HMBS family.</text>
</comment>
<dbReference type="EC" id="2.5.1.61" evidence="1"/>
<dbReference type="EMBL" id="AE014291">
    <property type="protein sequence ID" value="AAN30781.1"/>
    <property type="molecule type" value="Genomic_DNA"/>
</dbReference>
<dbReference type="EMBL" id="CP002997">
    <property type="protein sequence ID" value="AEM19198.1"/>
    <property type="molecule type" value="Genomic_DNA"/>
</dbReference>
<dbReference type="RefSeq" id="WP_004687669.1">
    <property type="nucleotide sequence ID" value="NZ_KN046804.1"/>
</dbReference>
<dbReference type="SMR" id="Q8FYI6"/>
<dbReference type="GeneID" id="97534825"/>
<dbReference type="KEGG" id="bms:BR1887"/>
<dbReference type="KEGG" id="bsi:BS1330_I1881"/>
<dbReference type="HOGENOM" id="CLU_019704_0_2_5"/>
<dbReference type="UniPathway" id="UPA00251">
    <property type="reaction ID" value="UER00319"/>
</dbReference>
<dbReference type="Proteomes" id="UP000007104">
    <property type="component" value="Chromosome I"/>
</dbReference>
<dbReference type="GO" id="GO:0005737">
    <property type="term" value="C:cytoplasm"/>
    <property type="evidence" value="ECO:0007669"/>
    <property type="project" value="TreeGrafter"/>
</dbReference>
<dbReference type="GO" id="GO:0004418">
    <property type="term" value="F:hydroxymethylbilane synthase activity"/>
    <property type="evidence" value="ECO:0007669"/>
    <property type="project" value="UniProtKB-UniRule"/>
</dbReference>
<dbReference type="GO" id="GO:0006782">
    <property type="term" value="P:protoporphyrinogen IX biosynthetic process"/>
    <property type="evidence" value="ECO:0007669"/>
    <property type="project" value="UniProtKB-UniRule"/>
</dbReference>
<dbReference type="FunFam" id="3.40.190.10:FF:000004">
    <property type="entry name" value="Porphobilinogen deaminase"/>
    <property type="match status" value="1"/>
</dbReference>
<dbReference type="FunFam" id="3.40.190.10:FF:000005">
    <property type="entry name" value="Porphobilinogen deaminase"/>
    <property type="match status" value="1"/>
</dbReference>
<dbReference type="Gene3D" id="3.40.190.10">
    <property type="entry name" value="Periplasmic binding protein-like II"/>
    <property type="match status" value="2"/>
</dbReference>
<dbReference type="Gene3D" id="3.30.160.40">
    <property type="entry name" value="Porphobilinogen deaminase, C-terminal domain"/>
    <property type="match status" value="1"/>
</dbReference>
<dbReference type="HAMAP" id="MF_00260">
    <property type="entry name" value="Porphobil_deam"/>
    <property type="match status" value="1"/>
</dbReference>
<dbReference type="InterPro" id="IPR000860">
    <property type="entry name" value="HemC"/>
</dbReference>
<dbReference type="InterPro" id="IPR022419">
    <property type="entry name" value="Porphobilin_deaminase_cofac_BS"/>
</dbReference>
<dbReference type="InterPro" id="IPR022417">
    <property type="entry name" value="Porphobilin_deaminase_N"/>
</dbReference>
<dbReference type="InterPro" id="IPR022418">
    <property type="entry name" value="Porphobilinogen_deaminase_C"/>
</dbReference>
<dbReference type="InterPro" id="IPR036803">
    <property type="entry name" value="Porphobilinogen_deaminase_C_sf"/>
</dbReference>
<dbReference type="NCBIfam" id="TIGR00212">
    <property type="entry name" value="hemC"/>
    <property type="match status" value="1"/>
</dbReference>
<dbReference type="PANTHER" id="PTHR11557">
    <property type="entry name" value="PORPHOBILINOGEN DEAMINASE"/>
    <property type="match status" value="1"/>
</dbReference>
<dbReference type="PANTHER" id="PTHR11557:SF0">
    <property type="entry name" value="PORPHOBILINOGEN DEAMINASE"/>
    <property type="match status" value="1"/>
</dbReference>
<dbReference type="Pfam" id="PF01379">
    <property type="entry name" value="Porphobil_deam"/>
    <property type="match status" value="1"/>
</dbReference>
<dbReference type="Pfam" id="PF03900">
    <property type="entry name" value="Porphobil_deamC"/>
    <property type="match status" value="1"/>
</dbReference>
<dbReference type="PIRSF" id="PIRSF001438">
    <property type="entry name" value="4pyrrol_synth_OHMeBilane_synth"/>
    <property type="match status" value="1"/>
</dbReference>
<dbReference type="PRINTS" id="PR00151">
    <property type="entry name" value="PORPHBDMNASE"/>
</dbReference>
<dbReference type="SUPFAM" id="SSF53850">
    <property type="entry name" value="Periplasmic binding protein-like II"/>
    <property type="match status" value="1"/>
</dbReference>
<dbReference type="SUPFAM" id="SSF54782">
    <property type="entry name" value="Porphobilinogen deaminase (hydroxymethylbilane synthase), C-terminal domain"/>
    <property type="match status" value="1"/>
</dbReference>
<dbReference type="PROSITE" id="PS00533">
    <property type="entry name" value="PORPHOBILINOGEN_DEAM"/>
    <property type="match status" value="1"/>
</dbReference>
<evidence type="ECO:0000255" key="1">
    <source>
        <dbReference type="HAMAP-Rule" id="MF_00260"/>
    </source>
</evidence>
<reference key="1">
    <citation type="journal article" date="2002" name="Proc. Natl. Acad. Sci. U.S.A.">
        <title>The Brucella suis genome reveals fundamental similarities between animal and plant pathogens and symbionts.</title>
        <authorList>
            <person name="Paulsen I.T."/>
            <person name="Seshadri R."/>
            <person name="Nelson K.E."/>
            <person name="Eisen J.A."/>
            <person name="Heidelberg J.F."/>
            <person name="Read T.D."/>
            <person name="Dodson R.J."/>
            <person name="Umayam L.A."/>
            <person name="Brinkac L.M."/>
            <person name="Beanan M.J."/>
            <person name="Daugherty S.C."/>
            <person name="DeBoy R.T."/>
            <person name="Durkin A.S."/>
            <person name="Kolonay J.F."/>
            <person name="Madupu R."/>
            <person name="Nelson W.C."/>
            <person name="Ayodeji B."/>
            <person name="Kraul M."/>
            <person name="Shetty J."/>
            <person name="Malek J.A."/>
            <person name="Van Aken S.E."/>
            <person name="Riedmuller S."/>
            <person name="Tettelin H."/>
            <person name="Gill S.R."/>
            <person name="White O."/>
            <person name="Salzberg S.L."/>
            <person name="Hoover D.L."/>
            <person name="Lindler L.E."/>
            <person name="Halling S.M."/>
            <person name="Boyle S.M."/>
            <person name="Fraser C.M."/>
        </authorList>
    </citation>
    <scope>NUCLEOTIDE SEQUENCE [LARGE SCALE GENOMIC DNA]</scope>
    <source>
        <strain>1330</strain>
    </source>
</reference>
<reference key="2">
    <citation type="journal article" date="2011" name="J. Bacteriol.">
        <title>Revised genome sequence of Brucella suis 1330.</title>
        <authorList>
            <person name="Tae H."/>
            <person name="Shallom S."/>
            <person name="Settlage R."/>
            <person name="Preston D."/>
            <person name="Adams L.G."/>
            <person name="Garner H.R."/>
        </authorList>
    </citation>
    <scope>NUCLEOTIDE SEQUENCE [LARGE SCALE GENOMIC DNA]</scope>
    <source>
        <strain>1330</strain>
    </source>
</reference>
<keyword id="KW-0627">Porphyrin biosynthesis</keyword>
<keyword id="KW-0808">Transferase</keyword>
<feature type="chain" id="PRO_0000142915" description="Porphobilinogen deaminase">
    <location>
        <begin position="1"/>
        <end position="314"/>
    </location>
</feature>
<feature type="modified residue" description="S-(dipyrrolylmethanemethyl)cysteine" evidence="1">
    <location>
        <position position="249"/>
    </location>
</feature>
<name>HEM3_BRUSU</name>
<sequence length="314" mass="33880">MQTASFKNGTLKIGTRGSKLALAQAYLTRRLLQEAHGLPEDAIEILPMSTAGDRIQDRPLSEVGGKGLFTEEIEQALKDGRIDIAVHSTKDMPTVLPEGLHLSVFLEREDPRDAFIGRSARRFMDLPQGATVGSSSLRRQALIRRLRPDIEVVMYRGNVDTRLRKLDAGEVDGTFLACAGLRRLGLADVITDLLDPSVFPPAPGQGAIGIESRIGDERIDVLLAPLAHRETQIALACERAFLGALDGSCRTPIAGLATVEGDRLSFRGMILTPDGRQAHEVTAEGVVSDAAALGTDAANRVRAMAGPHFFDGWQ</sequence>